<keyword id="KW-1015">Disulfide bond</keyword>
<keyword id="KW-0960">Knottin</keyword>
<keyword id="KW-0964">Secreted</keyword>
<keyword id="KW-0732">Signal</keyword>
<keyword id="KW-0800">Toxin</keyword>
<sequence>MKLAVVFLLTTVVFTLAQSQCENCADLQCNSTVHCCLVSTVRLPRWKREISRCGRLAIRRWRCEEPNSNGIYNRNCPCVPGLECREFRRGRRICLPEQSSTSTSSTQGPITSSTVTTQSEATTETETTTAAEGK</sequence>
<name>JZT74_CHIGU</name>
<feature type="signal peptide" evidence="3">
    <location>
        <begin position="1"/>
        <end position="19"/>
    </location>
</feature>
<feature type="peptide" id="PRO_0000398558" description="U34-theraphotoxin-Cg1a" evidence="7">
    <location>
        <begin position="20"/>
        <end position="134"/>
    </location>
</feature>
<feature type="region of interest" description="Disordered" evidence="4">
    <location>
        <begin position="97"/>
        <end position="134"/>
    </location>
</feature>
<feature type="compositionally biased region" description="Low complexity" evidence="4">
    <location>
        <begin position="99"/>
        <end position="134"/>
    </location>
</feature>
<feature type="disulfide bond" evidence="2">
    <location>
        <begin position="24"/>
        <end position="35"/>
    </location>
</feature>
<feature type="disulfide bond" evidence="2">
    <location>
        <begin position="29"/>
        <end position="53"/>
    </location>
</feature>
<feature type="disulfide bond" evidence="2">
    <location>
        <begin position="63"/>
        <end position="84"/>
    </location>
</feature>
<evidence type="ECO:0000250" key="1"/>
<evidence type="ECO:0000250" key="2">
    <source>
        <dbReference type="UniProtKB" id="B1P1J0"/>
    </source>
</evidence>
<evidence type="ECO:0000255" key="3"/>
<evidence type="ECO:0000256" key="4">
    <source>
        <dbReference type="SAM" id="MobiDB-lite"/>
    </source>
</evidence>
<evidence type="ECO:0000303" key="5">
    <source>
    </source>
</evidence>
<evidence type="ECO:0000305" key="6"/>
<evidence type="ECO:0000305" key="7">
    <source>
    </source>
</evidence>
<organism>
    <name type="scientific">Chilobrachys guangxiensis</name>
    <name type="common">Chinese earth tiger tarantula</name>
    <name type="synonym">Chilobrachys jingzhao</name>
    <dbReference type="NCBI Taxonomy" id="278060"/>
    <lineage>
        <taxon>Eukaryota</taxon>
        <taxon>Metazoa</taxon>
        <taxon>Ecdysozoa</taxon>
        <taxon>Arthropoda</taxon>
        <taxon>Chelicerata</taxon>
        <taxon>Arachnida</taxon>
        <taxon>Araneae</taxon>
        <taxon>Mygalomorphae</taxon>
        <taxon>Theraphosidae</taxon>
        <taxon>Chilobrachys</taxon>
    </lineage>
</organism>
<comment type="subcellular location">
    <subcellularLocation>
        <location evidence="1">Secreted</location>
    </subcellularLocation>
</comment>
<comment type="tissue specificity">
    <text evidence="7">Expressed by the venom gland.</text>
</comment>
<comment type="domain">
    <text evidence="2">The presence of a 'disulfide through disulfide knot' structurally defines this protein as a knottin.</text>
</comment>
<comment type="similarity">
    <text evidence="6">Belongs to the neurotoxin 32 family.</text>
</comment>
<dbReference type="EMBL" id="EU233923">
    <property type="protein sequence ID" value="ABY71742.1"/>
    <property type="molecule type" value="mRNA"/>
</dbReference>
<dbReference type="SMR" id="B1P1J2"/>
<dbReference type="TCDB" id="8.B.10.1.2">
    <property type="family name" value="the psalmotoxin-1 (pctx1) family"/>
</dbReference>
<dbReference type="ArachnoServer" id="AS000871">
    <property type="toxin name" value="U34-theraphotoxin-Cg1a"/>
</dbReference>
<dbReference type="GO" id="GO:0005576">
    <property type="term" value="C:extracellular region"/>
    <property type="evidence" value="ECO:0007669"/>
    <property type="project" value="UniProtKB-SubCell"/>
</dbReference>
<dbReference type="GO" id="GO:0090729">
    <property type="term" value="F:toxin activity"/>
    <property type="evidence" value="ECO:0007669"/>
    <property type="project" value="UniProtKB-KW"/>
</dbReference>
<dbReference type="Gene3D" id="2.10.80.10">
    <property type="entry name" value="Lipase, subunit A"/>
    <property type="match status" value="1"/>
</dbReference>
<accession>B1P1J2</accession>
<proteinExistence type="evidence at transcript level"/>
<reference key="1">
    <citation type="journal article" date="2008" name="Cell. Mol. Life Sci.">
        <title>Molecular diversity and evolution of cystine knot toxins of the tarantula Chilobrachys jingzhao.</title>
        <authorList>
            <person name="Chen J."/>
            <person name="Deng M."/>
            <person name="He Q."/>
            <person name="Meng E."/>
            <person name="Jiang L."/>
            <person name="Liao Z."/>
            <person name="Rong M."/>
            <person name="Liang S."/>
        </authorList>
    </citation>
    <scope>NUCLEOTIDE SEQUENCE [LARGE SCALE MRNA]</scope>
    <source>
        <tissue>Venom gland</tissue>
    </source>
</reference>
<protein>
    <recommendedName>
        <fullName evidence="6">U34-theraphotoxin-Cg1a</fullName>
        <shortName evidence="6">U34-TRTX-Cg1a</shortName>
    </recommendedName>
    <alternativeName>
        <fullName evidence="5">Jingzhaotoxin-74</fullName>
        <shortName evidence="5">JZTX-74</shortName>
    </alternativeName>
</protein>